<evidence type="ECO:0000255" key="1">
    <source>
        <dbReference type="HAMAP-Rule" id="MF_01367"/>
    </source>
</evidence>
<evidence type="ECO:0000305" key="2"/>
<feature type="chain" id="PRO_1000055653" description="Large ribosomal subunit protein uL14">
    <location>
        <begin position="1"/>
        <end position="122"/>
    </location>
</feature>
<accession>A6Q1I8</accession>
<reference key="1">
    <citation type="journal article" date="2007" name="Proc. Natl. Acad. Sci. U.S.A.">
        <title>Deep-sea vent epsilon-proteobacterial genomes provide insights into emergence of pathogens.</title>
        <authorList>
            <person name="Nakagawa S."/>
            <person name="Takaki Y."/>
            <person name="Shimamura S."/>
            <person name="Reysenbach A.-L."/>
            <person name="Takai K."/>
            <person name="Horikoshi K."/>
        </authorList>
    </citation>
    <scope>NUCLEOTIDE SEQUENCE [LARGE SCALE GENOMIC DNA]</scope>
    <source>
        <strain>SB155-2</strain>
    </source>
</reference>
<gene>
    <name evidence="1" type="primary">rplN</name>
    <name type="ordered locus">NIS_0233</name>
</gene>
<dbReference type="EMBL" id="AP009178">
    <property type="protein sequence ID" value="BAF69347.1"/>
    <property type="molecule type" value="Genomic_DNA"/>
</dbReference>
<dbReference type="RefSeq" id="WP_012081610.1">
    <property type="nucleotide sequence ID" value="NC_009662.1"/>
</dbReference>
<dbReference type="SMR" id="A6Q1I8"/>
<dbReference type="FunCoup" id="A6Q1I8">
    <property type="interactions" value="513"/>
</dbReference>
<dbReference type="STRING" id="387092.NIS_0233"/>
<dbReference type="KEGG" id="nis:NIS_0233"/>
<dbReference type="eggNOG" id="COG0093">
    <property type="taxonomic scope" value="Bacteria"/>
</dbReference>
<dbReference type="HOGENOM" id="CLU_095071_2_1_7"/>
<dbReference type="InParanoid" id="A6Q1I8"/>
<dbReference type="OrthoDB" id="9806379at2"/>
<dbReference type="Proteomes" id="UP000001118">
    <property type="component" value="Chromosome"/>
</dbReference>
<dbReference type="GO" id="GO:0022625">
    <property type="term" value="C:cytosolic large ribosomal subunit"/>
    <property type="evidence" value="ECO:0007669"/>
    <property type="project" value="TreeGrafter"/>
</dbReference>
<dbReference type="GO" id="GO:0070180">
    <property type="term" value="F:large ribosomal subunit rRNA binding"/>
    <property type="evidence" value="ECO:0007669"/>
    <property type="project" value="TreeGrafter"/>
</dbReference>
<dbReference type="GO" id="GO:0003735">
    <property type="term" value="F:structural constituent of ribosome"/>
    <property type="evidence" value="ECO:0007669"/>
    <property type="project" value="InterPro"/>
</dbReference>
<dbReference type="GO" id="GO:0006412">
    <property type="term" value="P:translation"/>
    <property type="evidence" value="ECO:0007669"/>
    <property type="project" value="UniProtKB-UniRule"/>
</dbReference>
<dbReference type="CDD" id="cd00337">
    <property type="entry name" value="Ribosomal_uL14"/>
    <property type="match status" value="1"/>
</dbReference>
<dbReference type="FunFam" id="2.40.150.20:FF:000001">
    <property type="entry name" value="50S ribosomal protein L14"/>
    <property type="match status" value="1"/>
</dbReference>
<dbReference type="Gene3D" id="2.40.150.20">
    <property type="entry name" value="Ribosomal protein L14"/>
    <property type="match status" value="1"/>
</dbReference>
<dbReference type="HAMAP" id="MF_01367">
    <property type="entry name" value="Ribosomal_uL14"/>
    <property type="match status" value="1"/>
</dbReference>
<dbReference type="InterPro" id="IPR000218">
    <property type="entry name" value="Ribosomal_uL14"/>
</dbReference>
<dbReference type="InterPro" id="IPR005745">
    <property type="entry name" value="Ribosomal_uL14_bac-type"/>
</dbReference>
<dbReference type="InterPro" id="IPR019972">
    <property type="entry name" value="Ribosomal_uL14_CS"/>
</dbReference>
<dbReference type="InterPro" id="IPR036853">
    <property type="entry name" value="Ribosomal_uL14_sf"/>
</dbReference>
<dbReference type="NCBIfam" id="TIGR01067">
    <property type="entry name" value="rplN_bact"/>
    <property type="match status" value="1"/>
</dbReference>
<dbReference type="PANTHER" id="PTHR11761">
    <property type="entry name" value="50S/60S RIBOSOMAL PROTEIN L14/L23"/>
    <property type="match status" value="1"/>
</dbReference>
<dbReference type="PANTHER" id="PTHR11761:SF3">
    <property type="entry name" value="LARGE RIBOSOMAL SUBUNIT PROTEIN UL14M"/>
    <property type="match status" value="1"/>
</dbReference>
<dbReference type="Pfam" id="PF00238">
    <property type="entry name" value="Ribosomal_L14"/>
    <property type="match status" value="1"/>
</dbReference>
<dbReference type="SMART" id="SM01374">
    <property type="entry name" value="Ribosomal_L14"/>
    <property type="match status" value="1"/>
</dbReference>
<dbReference type="SUPFAM" id="SSF50193">
    <property type="entry name" value="Ribosomal protein L14"/>
    <property type="match status" value="1"/>
</dbReference>
<dbReference type="PROSITE" id="PS00049">
    <property type="entry name" value="RIBOSOMAL_L14"/>
    <property type="match status" value="1"/>
</dbReference>
<organism>
    <name type="scientific">Nitratiruptor sp. (strain SB155-2)</name>
    <dbReference type="NCBI Taxonomy" id="387092"/>
    <lineage>
        <taxon>Bacteria</taxon>
        <taxon>Pseudomonadati</taxon>
        <taxon>Campylobacterota</taxon>
        <taxon>Epsilonproteobacteria</taxon>
        <taxon>Nautiliales</taxon>
        <taxon>Nitratiruptoraceae</taxon>
        <taxon>Nitratiruptor</taxon>
    </lineage>
</organism>
<sequence length="122" mass="13380">MIQSFTRLNVADNSGAKEIMAIKVLGGSKRRYASVGDVIVASVKKALPNGKVKKGQVVKAVVVRTKKEIQRENGSLIRFDDNAAVILDNKNEPIGTRIFGPVAREVRYKNFMKIVSLAPEVL</sequence>
<keyword id="KW-1185">Reference proteome</keyword>
<keyword id="KW-0687">Ribonucleoprotein</keyword>
<keyword id="KW-0689">Ribosomal protein</keyword>
<keyword id="KW-0694">RNA-binding</keyword>
<keyword id="KW-0699">rRNA-binding</keyword>
<proteinExistence type="inferred from homology"/>
<comment type="function">
    <text evidence="1">Binds to 23S rRNA. Forms part of two intersubunit bridges in the 70S ribosome.</text>
</comment>
<comment type="subunit">
    <text evidence="1">Part of the 50S ribosomal subunit. Forms a cluster with proteins L3 and L19. In the 70S ribosome, L14 and L19 interact and together make contacts with the 16S rRNA in bridges B5 and B8.</text>
</comment>
<comment type="similarity">
    <text evidence="1">Belongs to the universal ribosomal protein uL14 family.</text>
</comment>
<protein>
    <recommendedName>
        <fullName evidence="1">Large ribosomal subunit protein uL14</fullName>
    </recommendedName>
    <alternativeName>
        <fullName evidence="2">50S ribosomal protein L14</fullName>
    </alternativeName>
</protein>
<name>RL14_NITSB</name>